<protein>
    <recommendedName>
        <fullName>Kappa-theraphotoxin-Sc1a</fullName>
        <shortName>Kappa-TRTX-Sc1a</shortName>
    </recommendedName>
    <alternativeName>
        <fullName evidence="3">Stromatoxin-1</fullName>
        <shortName evidence="3">ScTx1</shortName>
    </alternativeName>
</protein>
<feature type="peptide" id="PRO_0000045025" description="Kappa-theraphotoxin-Sc1a">
    <location>
        <begin position="1"/>
        <end position="34"/>
    </location>
</feature>
<feature type="modified residue" description="Isoleucine amide" evidence="2">
    <location>
        <position position="34"/>
    </location>
</feature>
<feature type="disulfide bond" evidence="1">
    <location>
        <begin position="2"/>
        <end position="16"/>
    </location>
</feature>
<feature type="disulfide bond" evidence="1">
    <location>
        <begin position="9"/>
        <end position="21"/>
    </location>
</feature>
<feature type="disulfide bond" evidence="1">
    <location>
        <begin position="15"/>
        <end position="28"/>
    </location>
</feature>
<name>TX1_STRCF</name>
<keyword id="KW-0027">Amidation</keyword>
<keyword id="KW-0903">Direct protein sequencing</keyword>
<keyword id="KW-1015">Disulfide bond</keyword>
<keyword id="KW-0872">Ion channel impairing toxin</keyword>
<keyword id="KW-0960">Knottin</keyword>
<keyword id="KW-0528">Neurotoxin</keyword>
<keyword id="KW-0632">Potassium channel impairing toxin</keyword>
<keyword id="KW-0964">Secreted</keyword>
<keyword id="KW-0800">Toxin</keyword>
<keyword id="KW-1220">Voltage-gated potassium channel impairing toxin</keyword>
<organism>
    <name type="scientific">Stromatopelma calceatum</name>
    <name type="common">Featherleg baboon tarantula</name>
    <name type="synonym">Scodra calceata</name>
    <dbReference type="NCBI Taxonomy" id="269628"/>
    <lineage>
        <taxon>Eukaryota</taxon>
        <taxon>Metazoa</taxon>
        <taxon>Ecdysozoa</taxon>
        <taxon>Arthropoda</taxon>
        <taxon>Chelicerata</taxon>
        <taxon>Arachnida</taxon>
        <taxon>Araneae</taxon>
        <taxon>Mygalomorphae</taxon>
        <taxon>Theraphosidae</taxon>
        <taxon>Stromatopelma</taxon>
    </lineage>
</organism>
<reference key="1">
    <citation type="journal article" date="2002" name="Mol. Pharmacol.">
        <title>Novel tarantula toxins for subtypes of voltage-dependent potassium channels in the Kv2 and Kv4 subfamilies.</title>
        <authorList>
            <person name="Escoubas P."/>
            <person name="Diochot S."/>
            <person name="Celerier M.-L."/>
            <person name="Nakajima T."/>
            <person name="Lazdunski M."/>
        </authorList>
    </citation>
    <scope>PROTEIN SEQUENCE</scope>
    <scope>FUNCTION</scope>
    <scope>AMIDATION AT ILE-34</scope>
    <scope>MASS SPECTROMETRY</scope>
    <scope>3D-STRUCTURE MODELING</scope>
    <source>
        <tissue>Venom</tissue>
    </source>
</reference>
<dbReference type="SMR" id="P60991"/>
<dbReference type="ArachnoServer" id="AS000228">
    <property type="toxin name" value="kappa-theraphotoxin-Sc1a"/>
</dbReference>
<dbReference type="GO" id="GO:0005576">
    <property type="term" value="C:extracellular region"/>
    <property type="evidence" value="ECO:0007669"/>
    <property type="project" value="UniProtKB-SubCell"/>
</dbReference>
<dbReference type="GO" id="GO:0008200">
    <property type="term" value="F:ion channel inhibitor activity"/>
    <property type="evidence" value="ECO:0007669"/>
    <property type="project" value="InterPro"/>
</dbReference>
<dbReference type="GO" id="GO:0015459">
    <property type="term" value="F:potassium channel regulator activity"/>
    <property type="evidence" value="ECO:0007669"/>
    <property type="project" value="UniProtKB-KW"/>
</dbReference>
<dbReference type="GO" id="GO:0090729">
    <property type="term" value="F:toxin activity"/>
    <property type="evidence" value="ECO:0007669"/>
    <property type="project" value="UniProtKB-KW"/>
</dbReference>
<dbReference type="InterPro" id="IPR011696">
    <property type="entry name" value="Huwentoxin-1"/>
</dbReference>
<dbReference type="Pfam" id="PF07740">
    <property type="entry name" value="Toxin_12"/>
    <property type="match status" value="1"/>
</dbReference>
<dbReference type="SUPFAM" id="SSF57059">
    <property type="entry name" value="omega toxin-like"/>
    <property type="match status" value="1"/>
</dbReference>
<accession>P60991</accession>
<sequence>DCTRMFGACRRDSDCCPHLGCKPTSKYCAWDGTI</sequence>
<comment type="function">
    <text evidence="2">Acts as a gating-modifier to inhibit voltage-gated potassium channels. It inhibits delayed Kv2.1/KCNB1 (IC(50) is 12.7 nM), Kv2.1/Kv9.3 (IC(50) is 7.2 nM) (KCNB1/KCNS3), Kv2.2/KCNB2 (IC(50) is 21.4 nM), and transient Kv4.2/KCND2 (IC(50) is 1.2 nM) channels.</text>
</comment>
<comment type="subcellular location">
    <subcellularLocation>
        <location>Secreted</location>
    </subcellularLocation>
</comment>
<comment type="tissue specificity">
    <text>Expressed by the venom gland.</text>
</comment>
<comment type="domain">
    <text evidence="1">The presence of a 'disulfide through disulfide knot' structurally defines this protein as a knottin.</text>
</comment>
<comment type="mass spectrometry"/>
<comment type="miscellaneous">
    <text evidence="5">Negative results: does not have effect on Kv4.1/KCND1 and Kv4.3/KCND3. Intracerebroventricular injection into mice does not induce observable neurotoxicity symptoms (PubMed:12065754).</text>
</comment>
<comment type="similarity">
    <text evidence="4">Belongs to the neurotoxin 10 (Hwtx-1) family. 57 (ScTx1) subfamily.</text>
</comment>
<proteinExistence type="evidence at protein level"/>
<evidence type="ECO:0000250" key="1"/>
<evidence type="ECO:0000269" key="2">
    <source>
    </source>
</evidence>
<evidence type="ECO:0000303" key="3">
    <source>
    </source>
</evidence>
<evidence type="ECO:0000305" key="4"/>
<evidence type="ECO:0000305" key="5">
    <source>
    </source>
</evidence>